<sequence>MNQDMELPEAYTSASNDFRSDTFTTPTREMIEAALTATIGDAVYQEDIDTLKLEQHVAKLAGMEAGMFCVSGTLSNQIALRTHLTQPPYSILCDYRAHVYTHEAAGLAILSQAMVTPVIPSNGNYLTLEDIKKHYIPDDGDIHGAPTKVISLENTLHGIIHPLEELVRIKAWCMENDLRLHCDGARIWNASAESGVPLKQYGELFDSISICLSKSMGAPMGSILVGSHKFIKKANHFRKQQGGGVRQSGMMCKMAMVAIQGDWKGKMRRSHRMAHELARFCAEHGIPLESPADTNFVFLDLQKSKMNPDVLVKKSLKYGCKLMGGRVSFHYQISEESLEKIKQAILEAFEYSKKNPYDENGPTKIYRSESADAVGEIKTYKY</sequence>
<accession>O74267</accession>
<accession>Q753E8</accession>
<comment type="catalytic activity">
    <reaction>
        <text>L-threonine = acetaldehyde + glycine</text>
        <dbReference type="Rhea" id="RHEA:19625"/>
        <dbReference type="ChEBI" id="CHEBI:15343"/>
        <dbReference type="ChEBI" id="CHEBI:57305"/>
        <dbReference type="ChEBI" id="CHEBI:57926"/>
        <dbReference type="EC" id="4.1.2.48"/>
    </reaction>
</comment>
<comment type="catalytic activity">
    <reaction>
        <text>L-allo-threonine = acetaldehyde + glycine</text>
        <dbReference type="Rhea" id="RHEA:26209"/>
        <dbReference type="ChEBI" id="CHEBI:15343"/>
        <dbReference type="ChEBI" id="CHEBI:57305"/>
        <dbReference type="ChEBI" id="CHEBI:58585"/>
        <dbReference type="EC" id="4.1.2.48"/>
    </reaction>
</comment>
<comment type="cofactor">
    <cofactor>
        <name>pyridoxal 5'-phosphate</name>
        <dbReference type="ChEBI" id="CHEBI:597326"/>
    </cofactor>
</comment>
<comment type="pathway">
    <text>Amino-acid degradation; L-threonine degradation via aldolase pathway; acetaldehyde and glycine from L-threonine: step 1/1.</text>
</comment>
<comment type="subunit">
    <text evidence="1">Homotetramer.</text>
</comment>
<comment type="similarity">
    <text evidence="2">Belongs to the threonine aldolase family.</text>
</comment>
<organism>
    <name type="scientific">Eremothecium gossypii (strain ATCC 10895 / CBS 109.51 / FGSC 9923 / NRRL Y-1056)</name>
    <name type="common">Yeast</name>
    <name type="synonym">Ashbya gossypii</name>
    <dbReference type="NCBI Taxonomy" id="284811"/>
    <lineage>
        <taxon>Eukaryota</taxon>
        <taxon>Fungi</taxon>
        <taxon>Dikarya</taxon>
        <taxon>Ascomycota</taxon>
        <taxon>Saccharomycotina</taxon>
        <taxon>Saccharomycetes</taxon>
        <taxon>Saccharomycetales</taxon>
        <taxon>Saccharomycetaceae</taxon>
        <taxon>Eremothecium</taxon>
    </lineage>
</organism>
<gene>
    <name type="primary">GLY1</name>
    <name type="ordered locus">AFR366W</name>
</gene>
<proteinExistence type="inferred from homology"/>
<keyword id="KW-0456">Lyase</keyword>
<keyword id="KW-0663">Pyridoxal phosphate</keyword>
<keyword id="KW-1185">Reference proteome</keyword>
<dbReference type="EC" id="4.1.2.48"/>
<dbReference type="EMBL" id="AJ005442">
    <property type="protein sequence ID" value="CAA06545.1"/>
    <property type="molecule type" value="Genomic_DNA"/>
</dbReference>
<dbReference type="EMBL" id="AE016819">
    <property type="protein sequence ID" value="AAS53737.2"/>
    <property type="molecule type" value="Genomic_DNA"/>
</dbReference>
<dbReference type="RefSeq" id="NP_985913.2">
    <property type="nucleotide sequence ID" value="NM_211268.2"/>
</dbReference>
<dbReference type="SMR" id="O74267"/>
<dbReference type="FunCoup" id="O74267">
    <property type="interactions" value="1030"/>
</dbReference>
<dbReference type="STRING" id="284811.O74267"/>
<dbReference type="EnsemblFungi" id="AAS53737">
    <property type="protein sequence ID" value="AAS53737"/>
    <property type="gene ID" value="AGOS_AFR366W"/>
</dbReference>
<dbReference type="GeneID" id="4622183"/>
<dbReference type="KEGG" id="ago:AGOS_AFR366W"/>
<dbReference type="eggNOG" id="KOG1368">
    <property type="taxonomic scope" value="Eukaryota"/>
</dbReference>
<dbReference type="HOGENOM" id="CLU_029381_1_1_1"/>
<dbReference type="InParanoid" id="O74267"/>
<dbReference type="OMA" id="LVRIKAW"/>
<dbReference type="OrthoDB" id="10261951at2759"/>
<dbReference type="UniPathway" id="UPA00044">
    <property type="reaction ID" value="UER00429"/>
</dbReference>
<dbReference type="Proteomes" id="UP000000591">
    <property type="component" value="Chromosome VI"/>
</dbReference>
<dbReference type="GO" id="GO:0005829">
    <property type="term" value="C:cytosol"/>
    <property type="evidence" value="ECO:0000318"/>
    <property type="project" value="GO_Central"/>
</dbReference>
<dbReference type="GO" id="GO:0008732">
    <property type="term" value="F:L-allo-threonine aldolase activity"/>
    <property type="evidence" value="ECO:0000318"/>
    <property type="project" value="GO_Central"/>
</dbReference>
<dbReference type="GO" id="GO:0006545">
    <property type="term" value="P:glycine biosynthetic process"/>
    <property type="evidence" value="ECO:0000318"/>
    <property type="project" value="GO_Central"/>
</dbReference>
<dbReference type="GO" id="GO:0006567">
    <property type="term" value="P:threonine catabolic process"/>
    <property type="evidence" value="ECO:0000318"/>
    <property type="project" value="GO_Central"/>
</dbReference>
<dbReference type="CDD" id="cd06502">
    <property type="entry name" value="TA_like"/>
    <property type="match status" value="1"/>
</dbReference>
<dbReference type="FunFam" id="3.40.640.10:FF:000030">
    <property type="entry name" value="Low-specificity L-threonine aldolase"/>
    <property type="match status" value="1"/>
</dbReference>
<dbReference type="FunFam" id="3.90.1150.10:FF:000089">
    <property type="entry name" value="Threonine aldolase, putative"/>
    <property type="match status" value="1"/>
</dbReference>
<dbReference type="Gene3D" id="3.90.1150.10">
    <property type="entry name" value="Aspartate Aminotransferase, domain 1"/>
    <property type="match status" value="1"/>
</dbReference>
<dbReference type="Gene3D" id="3.40.640.10">
    <property type="entry name" value="Type I PLP-dependent aspartate aminotransferase-like (Major domain)"/>
    <property type="match status" value="1"/>
</dbReference>
<dbReference type="InterPro" id="IPR001597">
    <property type="entry name" value="ArAA_b-elim_lyase/Thr_aldolase"/>
</dbReference>
<dbReference type="InterPro" id="IPR023603">
    <property type="entry name" value="Low_specificity_L-TA-like"/>
</dbReference>
<dbReference type="InterPro" id="IPR015424">
    <property type="entry name" value="PyrdxlP-dep_Trfase"/>
</dbReference>
<dbReference type="InterPro" id="IPR015421">
    <property type="entry name" value="PyrdxlP-dep_Trfase_major"/>
</dbReference>
<dbReference type="InterPro" id="IPR015422">
    <property type="entry name" value="PyrdxlP-dep_Trfase_small"/>
</dbReference>
<dbReference type="NCBIfam" id="NF041359">
    <property type="entry name" value="GntG_guanitoxin"/>
    <property type="match status" value="1"/>
</dbReference>
<dbReference type="PANTHER" id="PTHR48097:SF9">
    <property type="entry name" value="L-THREONINE ALDOLASE"/>
    <property type="match status" value="1"/>
</dbReference>
<dbReference type="PANTHER" id="PTHR48097">
    <property type="entry name" value="L-THREONINE ALDOLASE-RELATED"/>
    <property type="match status" value="1"/>
</dbReference>
<dbReference type="Pfam" id="PF01212">
    <property type="entry name" value="Beta_elim_lyase"/>
    <property type="match status" value="1"/>
</dbReference>
<dbReference type="PIRSF" id="PIRSF017617">
    <property type="entry name" value="Thr_aldolase"/>
    <property type="match status" value="1"/>
</dbReference>
<dbReference type="SUPFAM" id="SSF53383">
    <property type="entry name" value="PLP-dependent transferases"/>
    <property type="match status" value="1"/>
</dbReference>
<protein>
    <recommendedName>
        <fullName>Low-specificity L-threonine aldolase</fullName>
        <ecNumber>4.1.2.48</ecNumber>
    </recommendedName>
</protein>
<feature type="chain" id="PRO_0000121569" description="Low-specificity L-threonine aldolase">
    <location>
        <begin position="1"/>
        <end position="382"/>
    </location>
</feature>
<feature type="modified residue" description="N6-(pyridoxal phosphate)lysine" evidence="1">
    <location>
        <position position="214"/>
    </location>
</feature>
<name>GLY1_EREGS</name>
<reference key="1">
    <citation type="journal article" date="1998" name="Appl. Environ. Microbiol.">
        <title>Threonine aldolase overexpression plus threonine supplementation enhanced riboflavin production in Ashbya gossypii.</title>
        <authorList>
            <person name="Monschau N."/>
            <person name="Sahm H."/>
            <person name="Stahmann K.-P."/>
        </authorList>
    </citation>
    <scope>NUCLEOTIDE SEQUENCE [GENOMIC DNA]</scope>
    <source>
        <strain>ATCC 10895 / CBS 109.51 / FGSC 9923 / NRRL Y-1056</strain>
    </source>
</reference>
<reference key="2">
    <citation type="journal article" date="2004" name="Science">
        <title>The Ashbya gossypii genome as a tool for mapping the ancient Saccharomyces cerevisiae genome.</title>
        <authorList>
            <person name="Dietrich F.S."/>
            <person name="Voegeli S."/>
            <person name="Brachat S."/>
            <person name="Lerch A."/>
            <person name="Gates K."/>
            <person name="Steiner S."/>
            <person name="Mohr C."/>
            <person name="Poehlmann R."/>
            <person name="Luedi P."/>
            <person name="Choi S."/>
            <person name="Wing R.A."/>
            <person name="Flavier A."/>
            <person name="Gaffney T.D."/>
            <person name="Philippsen P."/>
        </authorList>
    </citation>
    <scope>NUCLEOTIDE SEQUENCE [LARGE SCALE GENOMIC DNA]</scope>
    <source>
        <strain>ATCC 10895 / CBS 109.51 / FGSC 9923 / NRRL Y-1056</strain>
    </source>
</reference>
<reference key="3">
    <citation type="journal article" date="2013" name="G3 (Bethesda)">
        <title>Genomes of Ashbya fungi isolated from insects reveal four mating-type loci, numerous translocations, lack of transposons, and distinct gene duplications.</title>
        <authorList>
            <person name="Dietrich F.S."/>
            <person name="Voegeli S."/>
            <person name="Kuo S."/>
            <person name="Philippsen P."/>
        </authorList>
    </citation>
    <scope>GENOME REANNOTATION</scope>
    <scope>SEQUENCE REVISION TO 14</scope>
    <source>
        <strain>ATCC 10895 / CBS 109.51 / FGSC 9923 / NRRL Y-1056</strain>
    </source>
</reference>
<evidence type="ECO:0000250" key="1"/>
<evidence type="ECO:0000305" key="2"/>